<comment type="function">
    <text evidence="1 2 3">Modulates the antiapoptotic activity of the viral protein BHRF1. May also play an active part in oncogenesis in Burkitt's lymphomy and nasopharyngeal carcinoma.</text>
</comment>
<comment type="subunit">
    <text evidence="1 2">Interacts with BHRF1; this interaction modulates BHRF1 activity. Interacts with host BAX and BAK1.</text>
</comment>
<comment type="interaction">
    <interactant intactId="EBI-2621293">
        <id>P0CK58</id>
    </interactant>
    <interactant intactId="EBI-2621352">
        <id>Q1HVC7</id>
        <label>BVRF2/BdRF1</label>
    </interactant>
    <organismsDiffer>true</organismsDiffer>
    <experiments>2</experiments>
</comment>
<comment type="subcellular location">
    <subcellularLocation>
        <location evidence="2">Host cytoplasm</location>
    </subcellularLocation>
</comment>
<comment type="similarity">
    <text evidence="4">Belongs to the Epstein-Barr virus BALF1 family.</text>
</comment>
<name>BALF1_EBVB9</name>
<evidence type="ECO:0000269" key="1">
    <source>
    </source>
</evidence>
<evidence type="ECO:0000269" key="2">
    <source>
    </source>
</evidence>
<evidence type="ECO:0000269" key="3">
    <source>
    </source>
</evidence>
<evidence type="ECO:0000305" key="4"/>
<organismHost>
    <name type="scientific">Homo sapiens</name>
    <name type="common">Human</name>
    <dbReference type="NCBI Taxonomy" id="9606"/>
</organismHost>
<reference key="1">
    <citation type="journal article" date="1984" name="Nature">
        <title>DNA sequence and expression of the B95-8 Epstein-Barr virus genome.</title>
        <authorList>
            <person name="Baer R."/>
            <person name="Bankier A.T."/>
            <person name="Biggin M.D."/>
            <person name="Deininger P.L."/>
            <person name="Farrell P.J."/>
            <person name="Gibson T.J."/>
            <person name="Hatfull G."/>
            <person name="Hudson G.S."/>
            <person name="Satchwell S.C."/>
            <person name="Seguin C."/>
            <person name="Tuffnell P.S."/>
            <person name="Barrell B.G."/>
        </authorList>
    </citation>
    <scope>NUCLEOTIDE SEQUENCE [LARGE SCALE GENOMIC DNA]</scope>
</reference>
<reference key="2">
    <citation type="journal article" date="2002" name="J. Virol.">
        <title>Epstein-Barr virus BALF1 is a BCL-2-like antagonist of the herpesvirus antiapoptotic BCL-2 proteins.</title>
        <authorList>
            <person name="Bellows D.S."/>
            <person name="Howell M."/>
            <person name="Pearson C."/>
            <person name="Hazlewood S.A."/>
            <person name="Hardwick J.M."/>
        </authorList>
    </citation>
    <scope>NUCLEOTIDE SEQUENCE [GENOMIC RNA]</scope>
    <scope>FUNCTION</scope>
    <scope>INTERACTION WITH BHRF1</scope>
    <scope>SUBCELLULAR LOCATION</scope>
    <source>
        <strain>G54</strain>
        <strain>G64</strain>
        <strain>Mutu</strain>
        <strain>NPC-7</strain>
    </source>
</reference>
<reference key="3">
    <citation type="journal article" date="2003" name="Virology">
        <title>Updated Epstein-Barr virus (EBV) DNA sequence and analysis of a promoter for the BART (CST, BARF0) RNAs of EBV.</title>
        <authorList>
            <person name="de Jesus O."/>
            <person name="Smith P.R."/>
            <person name="Spender L.C."/>
            <person name="Elgueta Karstegl C."/>
            <person name="Niller H.H."/>
            <person name="Huang D."/>
            <person name="Farrell P.J."/>
        </authorList>
    </citation>
    <scope>GENOME REANNOTATION</scope>
</reference>
<reference key="4">
    <citation type="journal article" date="1999" name="J. Virol.">
        <title>Epstein-Barr virus encodes a novel homolog of the bcl-2 oncogene that inhibits apoptosis and associates with Bax and Bak.</title>
        <authorList>
            <person name="Marshall W.L."/>
            <person name="Yim C."/>
            <person name="Gustafson E."/>
            <person name="Graf T."/>
            <person name="Sage D.R."/>
            <person name="Hanify K."/>
            <person name="Williams L."/>
            <person name="Fingeroth J."/>
            <person name="Finberg R.W."/>
        </authorList>
    </citation>
    <scope>FUNCTION</scope>
    <scope>INTERACTION WITH HOST BAX AND BAK1</scope>
</reference>
<reference key="5">
    <citation type="journal article" date="2005" name="J. Clin. Virol.">
        <title>Epstein-Barr virus encoded BALF1 gene is transcribed in Burkitt's lymphoma cell lines and in nasopharyngeal carcinoma's biopsies.</title>
        <authorList>
            <person name="Cabras G."/>
            <person name="Decaussin G."/>
            <person name="Zeng Y."/>
            <person name="Djennaoui D."/>
            <person name="Melouli H."/>
            <person name="Broully P."/>
            <person name="Bouguermouh A.M."/>
            <person name="Ooka T."/>
        </authorList>
    </citation>
    <scope>FUNCTION</scope>
</reference>
<feature type="chain" id="PRO_0000116271" description="Apoptosis regulator BALF1">
    <location>
        <begin position="1"/>
        <end position="220"/>
    </location>
</feature>
<proteinExistence type="evidence at protein level"/>
<sequence length="220" mass="25148">MNLAIALDSPHPGLASYTILPRPFYHISLKPVSWPDETMRPAKSTDSVFVRTPVEAWVAPSPPDDKVAESSYLMFRAMYAVFTRDEKDLPLPALVLCRLIKASLRKDRKLYAELACRTADIGGKDTHVRLIISVLRAVYNDHYDYWSRLRVVLCYTVVFAVRNYLDDHKSAAFVLGAIAHYLALYRRLWFARLGGMPRSLRRQFPVTWALASLTDFLKSL</sequence>
<accession>P0CK58</accession>
<accession>P03229</accession>
<accession>Q777A6</accession>
<keyword id="KW-0053">Apoptosis</keyword>
<keyword id="KW-0244">Early protein</keyword>
<keyword id="KW-1035">Host cytoplasm</keyword>
<keyword id="KW-0945">Host-virus interaction</keyword>
<keyword id="KW-1119">Modulation of host cell apoptosis by virus</keyword>
<keyword id="KW-0553">Oncogene</keyword>
<keyword id="KW-1185">Reference proteome</keyword>
<gene>
    <name type="ORF">BALF1</name>
</gene>
<protein>
    <recommendedName>
        <fullName>Apoptosis regulator BALF1</fullName>
    </recommendedName>
</protein>
<organism>
    <name type="scientific">Epstein-Barr virus (strain B95-8)</name>
    <name type="common">HHV-4</name>
    <name type="synonym">Human herpesvirus 4</name>
    <dbReference type="NCBI Taxonomy" id="10377"/>
    <lineage>
        <taxon>Viruses</taxon>
        <taxon>Duplodnaviria</taxon>
        <taxon>Heunggongvirae</taxon>
        <taxon>Peploviricota</taxon>
        <taxon>Herviviricetes</taxon>
        <taxon>Herpesvirales</taxon>
        <taxon>Orthoherpesviridae</taxon>
        <taxon>Gammaherpesvirinae</taxon>
        <taxon>Lymphocryptovirus</taxon>
        <taxon>Lymphocryptovirus humangamma4</taxon>
        <taxon>Epstein-Barr virus (strain GD1)</taxon>
    </lineage>
</organism>
<dbReference type="EMBL" id="V01555">
    <property type="protein sequence ID" value="CAA24810.1"/>
    <property type="molecule type" value="Genomic_DNA"/>
</dbReference>
<dbReference type="EMBL" id="AJ507799">
    <property type="protein sequence ID" value="CAD53468.1"/>
    <property type="molecule type" value="Genomic_DNA"/>
</dbReference>
<dbReference type="EMBL" id="AF401274">
    <property type="protein sequence ID" value="AAK95616.1"/>
    <property type="molecule type" value="Genomic_DNA"/>
</dbReference>
<dbReference type="EMBL" id="AF401276">
    <property type="protein sequence ID" value="AAK95618.1"/>
    <property type="molecule type" value="Genomic_DNA"/>
</dbReference>
<dbReference type="EMBL" id="AF401277">
    <property type="protein sequence ID" value="AAK95619.1"/>
    <property type="molecule type" value="Genomic_DNA"/>
</dbReference>
<dbReference type="EMBL" id="AF401278">
    <property type="protein sequence ID" value="AAK95620.1"/>
    <property type="molecule type" value="Genomic_DNA"/>
</dbReference>
<dbReference type="PIR" id="C43045">
    <property type="entry name" value="QQBE49"/>
</dbReference>
<dbReference type="RefSeq" id="YP_401718.2">
    <property type="nucleotide sequence ID" value="NC_007605.1"/>
</dbReference>
<dbReference type="SMR" id="P0CK58"/>
<dbReference type="IntAct" id="P0CK58">
    <property type="interactions" value="136"/>
</dbReference>
<dbReference type="MINT" id="P0CK58"/>
<dbReference type="DNASU" id="3783677"/>
<dbReference type="GeneID" id="3783677"/>
<dbReference type="KEGG" id="vg:3783677"/>
<dbReference type="Proteomes" id="UP000153037">
    <property type="component" value="Segment"/>
</dbReference>
<dbReference type="GO" id="GO:0030430">
    <property type="term" value="C:host cell cytoplasm"/>
    <property type="evidence" value="ECO:0007669"/>
    <property type="project" value="UniProtKB-SubCell"/>
</dbReference>
<dbReference type="GO" id="GO:0043066">
    <property type="term" value="P:negative regulation of apoptotic process"/>
    <property type="evidence" value="ECO:0000314"/>
    <property type="project" value="CACAO"/>
</dbReference>
<dbReference type="GO" id="GO:0033668">
    <property type="term" value="P:symbiont-mediated suppression of host apoptosis"/>
    <property type="evidence" value="ECO:0000269"/>
    <property type="project" value="SigSci"/>
</dbReference>
<dbReference type="InterPro" id="IPR010677">
    <property type="entry name" value="HHV-4_BALF1"/>
</dbReference>
<dbReference type="Pfam" id="PF06861">
    <property type="entry name" value="BALF1"/>
    <property type="match status" value="1"/>
</dbReference>